<protein>
    <recommendedName>
        <fullName evidence="1">Uronate isomerase</fullName>
        <ecNumber evidence="1">5.3.1.12</ecNumber>
    </recommendedName>
    <alternativeName>
        <fullName evidence="1">Glucuronate isomerase</fullName>
    </alternativeName>
    <alternativeName>
        <fullName evidence="1">Uronic isomerase</fullName>
    </alternativeName>
</protein>
<feature type="chain" id="PRO_1000131608" description="Uronate isomerase">
    <location>
        <begin position="1"/>
        <end position="470"/>
    </location>
</feature>
<accession>B2U1U1</accession>
<keyword id="KW-0413">Isomerase</keyword>
<keyword id="KW-1185">Reference proteome</keyword>
<gene>
    <name evidence="1" type="primary">uxaC</name>
    <name type="ordered locus">SbBS512_E3528</name>
</gene>
<organism>
    <name type="scientific">Shigella boydii serotype 18 (strain CDC 3083-94 / BS512)</name>
    <dbReference type="NCBI Taxonomy" id="344609"/>
    <lineage>
        <taxon>Bacteria</taxon>
        <taxon>Pseudomonadati</taxon>
        <taxon>Pseudomonadota</taxon>
        <taxon>Gammaproteobacteria</taxon>
        <taxon>Enterobacterales</taxon>
        <taxon>Enterobacteriaceae</taxon>
        <taxon>Shigella</taxon>
    </lineage>
</organism>
<dbReference type="EC" id="5.3.1.12" evidence="1"/>
<dbReference type="EMBL" id="CP001063">
    <property type="protein sequence ID" value="ACD08217.1"/>
    <property type="molecule type" value="Genomic_DNA"/>
</dbReference>
<dbReference type="RefSeq" id="WP_000187449.1">
    <property type="nucleotide sequence ID" value="NC_010658.1"/>
</dbReference>
<dbReference type="SMR" id="B2U1U1"/>
<dbReference type="STRING" id="344609.SbBS512_E3528"/>
<dbReference type="KEGG" id="sbc:SbBS512_E3528"/>
<dbReference type="HOGENOM" id="CLU_044465_1_0_6"/>
<dbReference type="UniPathway" id="UPA00246"/>
<dbReference type="Proteomes" id="UP000001030">
    <property type="component" value="Chromosome"/>
</dbReference>
<dbReference type="GO" id="GO:0008880">
    <property type="term" value="F:glucuronate isomerase activity"/>
    <property type="evidence" value="ECO:0007669"/>
    <property type="project" value="UniProtKB-UniRule"/>
</dbReference>
<dbReference type="GO" id="GO:0019698">
    <property type="term" value="P:D-galacturonate catabolic process"/>
    <property type="evidence" value="ECO:0007669"/>
    <property type="project" value="TreeGrafter"/>
</dbReference>
<dbReference type="GO" id="GO:0042840">
    <property type="term" value="P:D-glucuronate catabolic process"/>
    <property type="evidence" value="ECO:0007669"/>
    <property type="project" value="TreeGrafter"/>
</dbReference>
<dbReference type="FunFam" id="1.10.2020.10:FF:000001">
    <property type="entry name" value="Uronate isomerase"/>
    <property type="match status" value="1"/>
</dbReference>
<dbReference type="Gene3D" id="3.20.20.140">
    <property type="entry name" value="Metal-dependent hydrolases"/>
    <property type="match status" value="1"/>
</dbReference>
<dbReference type="Gene3D" id="1.10.2020.10">
    <property type="entry name" value="uronate isomerase, domain 2, chain A"/>
    <property type="match status" value="1"/>
</dbReference>
<dbReference type="HAMAP" id="MF_00675">
    <property type="entry name" value="UxaC"/>
    <property type="match status" value="1"/>
</dbReference>
<dbReference type="InterPro" id="IPR032466">
    <property type="entry name" value="Metal_Hydrolase"/>
</dbReference>
<dbReference type="InterPro" id="IPR003766">
    <property type="entry name" value="Uronate_isomerase"/>
</dbReference>
<dbReference type="NCBIfam" id="NF002794">
    <property type="entry name" value="PRK02925.1"/>
    <property type="match status" value="1"/>
</dbReference>
<dbReference type="PANTHER" id="PTHR30068">
    <property type="entry name" value="URONATE ISOMERASE"/>
    <property type="match status" value="1"/>
</dbReference>
<dbReference type="PANTHER" id="PTHR30068:SF4">
    <property type="entry name" value="URONATE ISOMERASE"/>
    <property type="match status" value="1"/>
</dbReference>
<dbReference type="Pfam" id="PF02614">
    <property type="entry name" value="UxaC"/>
    <property type="match status" value="1"/>
</dbReference>
<dbReference type="SUPFAM" id="SSF51556">
    <property type="entry name" value="Metallo-dependent hydrolases"/>
    <property type="match status" value="1"/>
</dbReference>
<sequence>MTPFMTEDFLLDTEFARRLYHDYAKDQPIFDYHCHLPPQQIAEDYRFKNLYDIWLKGDHYKWRAMRTNGVAERLCTGDASDREKFDAWAATVPHTIGNPLYHWTHLELRRPFGITGKLLSPSTADEIWNECNELLAQDNFSARGIMQQMNVKMVGTTDDPIDSLEHHAEIAKDGSFTIKVLPSWRPDKAFNIEQATFNDYMAKLGEVSDTDIRRFADLQTGLTKRLDHFAAHGCKVSDHALDVVMFAEANEAELDSILARRLAGETLSEHEVAQFKTAVLVFLGAEYARRGWVQQYHIGALRNNNLRQFKLLGPDVGFDSINDRPMAEELSKLLSKQNEENLLPKTILYCLNPRDNEVLGTMIGNFQGEGMPGKMQFGSGWWFNDQKDGMERQMTQLAQLGLLSRFVGMLTDSRSFLSYTRHEYFRRILCQMIGRWVEAGEAPADINLLGEMVKNICFNNARDYFAIELN</sequence>
<proteinExistence type="inferred from homology"/>
<reference key="1">
    <citation type="submission" date="2008-05" db="EMBL/GenBank/DDBJ databases">
        <title>Complete sequence of Shigella boydii serotype 18 strain BS512.</title>
        <authorList>
            <person name="Rasko D.A."/>
            <person name="Rosovitz M."/>
            <person name="Maurelli A.T."/>
            <person name="Myers G."/>
            <person name="Seshadri R."/>
            <person name="Cer R."/>
            <person name="Jiang L."/>
            <person name="Ravel J."/>
            <person name="Sebastian Y."/>
        </authorList>
    </citation>
    <scope>NUCLEOTIDE SEQUENCE [LARGE SCALE GENOMIC DNA]</scope>
    <source>
        <strain>CDC 3083-94 / BS512</strain>
    </source>
</reference>
<comment type="catalytic activity">
    <reaction evidence="1">
        <text>D-glucuronate = D-fructuronate</text>
        <dbReference type="Rhea" id="RHEA:13049"/>
        <dbReference type="ChEBI" id="CHEBI:58720"/>
        <dbReference type="ChEBI" id="CHEBI:59863"/>
        <dbReference type="EC" id="5.3.1.12"/>
    </reaction>
</comment>
<comment type="catalytic activity">
    <reaction evidence="1">
        <text>aldehydo-D-galacturonate = keto-D-tagaturonate</text>
        <dbReference type="Rhea" id="RHEA:27702"/>
        <dbReference type="ChEBI" id="CHEBI:12952"/>
        <dbReference type="ChEBI" id="CHEBI:17886"/>
        <dbReference type="EC" id="5.3.1.12"/>
    </reaction>
</comment>
<comment type="pathway">
    <text evidence="1">Carbohydrate metabolism; pentose and glucuronate interconversion.</text>
</comment>
<comment type="similarity">
    <text evidence="1">Belongs to the metallo-dependent hydrolases superfamily. Uronate isomerase family.</text>
</comment>
<name>UXAC_SHIB3</name>
<evidence type="ECO:0000255" key="1">
    <source>
        <dbReference type="HAMAP-Rule" id="MF_00675"/>
    </source>
</evidence>